<comment type="subcellular location">
    <subcellularLocation>
        <location evidence="2">Mitochondrion</location>
    </subcellularLocation>
</comment>
<comment type="similarity">
    <text evidence="2">Belongs to the PPR family. P subfamily.</text>
</comment>
<comment type="online information" name="Pentatricopeptide repeat proteins">
    <link uri="https://ppr.plantenergy.uwa.edu.au"/>
</comment>
<reference key="1">
    <citation type="journal article" date="1999" name="Nature">
        <title>Sequence and analysis of chromosome 2 of the plant Arabidopsis thaliana.</title>
        <authorList>
            <person name="Lin X."/>
            <person name="Kaul S."/>
            <person name="Rounsley S.D."/>
            <person name="Shea T.P."/>
            <person name="Benito M.-I."/>
            <person name="Town C.D."/>
            <person name="Fujii C.Y."/>
            <person name="Mason T.M."/>
            <person name="Bowman C.L."/>
            <person name="Barnstead M.E."/>
            <person name="Feldblyum T.V."/>
            <person name="Buell C.R."/>
            <person name="Ketchum K.A."/>
            <person name="Lee J.J."/>
            <person name="Ronning C.M."/>
            <person name="Koo H.L."/>
            <person name="Moffat K.S."/>
            <person name="Cronin L.A."/>
            <person name="Shen M."/>
            <person name="Pai G."/>
            <person name="Van Aken S."/>
            <person name="Umayam L."/>
            <person name="Tallon L.J."/>
            <person name="Gill J.E."/>
            <person name="Adams M.D."/>
            <person name="Carrera A.J."/>
            <person name="Creasy T.H."/>
            <person name="Goodman H.M."/>
            <person name="Somerville C.R."/>
            <person name="Copenhaver G.P."/>
            <person name="Preuss D."/>
            <person name="Nierman W.C."/>
            <person name="White O."/>
            <person name="Eisen J.A."/>
            <person name="Salzberg S.L."/>
            <person name="Fraser C.M."/>
            <person name="Venter J.C."/>
        </authorList>
    </citation>
    <scope>NUCLEOTIDE SEQUENCE [LARGE SCALE GENOMIC DNA]</scope>
    <source>
        <strain>cv. Columbia</strain>
    </source>
</reference>
<reference key="2">
    <citation type="journal article" date="2017" name="Plant J.">
        <title>Araport11: a complete reannotation of the Arabidopsis thaliana reference genome.</title>
        <authorList>
            <person name="Cheng C.Y."/>
            <person name="Krishnakumar V."/>
            <person name="Chan A.P."/>
            <person name="Thibaud-Nissen F."/>
            <person name="Schobel S."/>
            <person name="Town C.D."/>
        </authorList>
    </citation>
    <scope>GENOME REANNOTATION</scope>
    <source>
        <strain>cv. Columbia</strain>
    </source>
</reference>
<reference key="3">
    <citation type="submission" date="2006-07" db="EMBL/GenBank/DDBJ databases">
        <title>Large-scale analysis of RIKEN Arabidopsis full-length (RAFL) cDNAs.</title>
        <authorList>
            <person name="Totoki Y."/>
            <person name="Seki M."/>
            <person name="Ishida J."/>
            <person name="Nakajima M."/>
            <person name="Enju A."/>
            <person name="Kamiya A."/>
            <person name="Narusaka M."/>
            <person name="Shin-i T."/>
            <person name="Nakagawa M."/>
            <person name="Sakamoto N."/>
            <person name="Oishi K."/>
            <person name="Kohara Y."/>
            <person name="Kobayashi M."/>
            <person name="Toyoda A."/>
            <person name="Sakaki Y."/>
            <person name="Sakurai T."/>
            <person name="Iida K."/>
            <person name="Akiyama K."/>
            <person name="Satou M."/>
            <person name="Toyoda T."/>
            <person name="Konagaya A."/>
            <person name="Carninci P."/>
            <person name="Kawai J."/>
            <person name="Hayashizaki Y."/>
            <person name="Shinozaki K."/>
        </authorList>
    </citation>
    <scope>NUCLEOTIDE SEQUENCE [LARGE SCALE MRNA]</scope>
    <source>
        <strain>cv. Columbia</strain>
    </source>
</reference>
<reference key="4">
    <citation type="journal article" date="2004" name="Plant Cell">
        <title>Genome-wide analysis of Arabidopsis pentatricopeptide repeat proteins reveals their essential role in organelle biogenesis.</title>
        <authorList>
            <person name="Lurin C."/>
            <person name="Andres C."/>
            <person name="Aubourg S."/>
            <person name="Bellaoui M."/>
            <person name="Bitton F."/>
            <person name="Bruyere C."/>
            <person name="Caboche M."/>
            <person name="Debast C."/>
            <person name="Gualberto J."/>
            <person name="Hoffmann B."/>
            <person name="Lecharny A."/>
            <person name="Le Ret M."/>
            <person name="Martin-Magniette M.-L."/>
            <person name="Mireau H."/>
            <person name="Peeters N."/>
            <person name="Renou J.-P."/>
            <person name="Szurek B."/>
            <person name="Taconnat L."/>
            <person name="Small I."/>
        </authorList>
    </citation>
    <scope>GENE FAMILY</scope>
</reference>
<sequence>MLLLKQISPPFHLHQLRRRISTIISAGFTLNLPKLEPSSDAELISQMLITNHNPFHFMESSLQLNGISLTPNLIHQTLLRLRHNSKIALSFFQYLRSLPSPSTTPTSFNLIIDILGRVRQFDVVRQLIVEMDQTSPETFLILVKRLIAAGLTRQAVRAFDDAPCFLENRRFRLVEFGFLLDTLCKYGYTKMAVGVFNERKEEFGSDEKVYTILIAGWCKLRRIDMAEKFLVEMIESGIEPNVVTYNVLLNGICRTASLHPEERFERNVRNAEKVFDEMRQRGIEPDVTSFSIVLHMYSRAHKAELTLDKMKLMKAKGISPTIETYTSVVKCLCSCGRLEEAEELLETMVESGISPSSATYNCFFKEYKGRKDANGAMNLYRKMKNGLCKPSTQTYNVLLGTFINLGKMETVKEIWDDLKASETGPDLDSYTSLVHGLCSKEKWKEACGYFVEMIERGFLPQKLTFETLYKGLIQSNKMRTWRRLKKKLDEESITFGSEFQRYPFEPYKR</sequence>
<organism>
    <name type="scientific">Arabidopsis thaliana</name>
    <name type="common">Mouse-ear cress</name>
    <dbReference type="NCBI Taxonomy" id="3702"/>
    <lineage>
        <taxon>Eukaryota</taxon>
        <taxon>Viridiplantae</taxon>
        <taxon>Streptophyta</taxon>
        <taxon>Embryophyta</taxon>
        <taxon>Tracheophyta</taxon>
        <taxon>Spermatophyta</taxon>
        <taxon>Magnoliopsida</taxon>
        <taxon>eudicotyledons</taxon>
        <taxon>Gunneridae</taxon>
        <taxon>Pentapetalae</taxon>
        <taxon>rosids</taxon>
        <taxon>malvids</taxon>
        <taxon>Brassicales</taxon>
        <taxon>Brassicaceae</taxon>
        <taxon>Camelineae</taxon>
        <taxon>Arabidopsis</taxon>
    </lineage>
</organism>
<keyword id="KW-0496">Mitochondrion</keyword>
<keyword id="KW-1185">Reference proteome</keyword>
<keyword id="KW-0677">Repeat</keyword>
<keyword id="KW-0809">Transit peptide</keyword>
<dbReference type="EMBL" id="AC007294">
    <property type="status" value="NOT_ANNOTATED_CDS"/>
    <property type="molecule type" value="Genomic_DNA"/>
</dbReference>
<dbReference type="EMBL" id="CP002685">
    <property type="status" value="NOT_ANNOTATED_CDS"/>
    <property type="molecule type" value="Genomic_DNA"/>
</dbReference>
<dbReference type="EMBL" id="AK229194">
    <property type="protein sequence ID" value="BAF01064.1"/>
    <property type="molecule type" value="mRNA"/>
</dbReference>
<dbReference type="SMR" id="Q0WP85"/>
<dbReference type="Araport" id="AT2G13420"/>
<dbReference type="TAIR" id="AT2G13420"/>
<dbReference type="InParanoid" id="Q0WP85"/>
<dbReference type="PRO" id="PR:Q0WP85"/>
<dbReference type="Proteomes" id="UP000006548">
    <property type="component" value="Chromosome 2"/>
</dbReference>
<dbReference type="ExpressionAtlas" id="Q0WP85">
    <property type="expression patterns" value="baseline and differential"/>
</dbReference>
<dbReference type="GO" id="GO:0005739">
    <property type="term" value="C:mitochondrion"/>
    <property type="evidence" value="ECO:0007669"/>
    <property type="project" value="UniProtKB-SubCell"/>
</dbReference>
<dbReference type="Gene3D" id="1.25.40.10">
    <property type="entry name" value="Tetratricopeptide repeat domain"/>
    <property type="match status" value="4"/>
</dbReference>
<dbReference type="InterPro" id="IPR002885">
    <property type="entry name" value="Pentatricopeptide_rpt"/>
</dbReference>
<dbReference type="InterPro" id="IPR011990">
    <property type="entry name" value="TPR-like_helical_dom_sf"/>
</dbReference>
<dbReference type="NCBIfam" id="TIGR00756">
    <property type="entry name" value="PPR"/>
    <property type="match status" value="4"/>
</dbReference>
<dbReference type="PANTHER" id="PTHR47936:SF8">
    <property type="entry name" value="PENTATRICOPEPTIDE REPEAT-CONTAINING PROTEIN"/>
    <property type="match status" value="1"/>
</dbReference>
<dbReference type="PANTHER" id="PTHR47936">
    <property type="entry name" value="PPR_LONG DOMAIN-CONTAINING PROTEIN"/>
    <property type="match status" value="1"/>
</dbReference>
<dbReference type="Pfam" id="PF01535">
    <property type="entry name" value="PPR"/>
    <property type="match status" value="1"/>
</dbReference>
<dbReference type="Pfam" id="PF13041">
    <property type="entry name" value="PPR_2"/>
    <property type="match status" value="4"/>
</dbReference>
<dbReference type="PROSITE" id="PS51375">
    <property type="entry name" value="PPR"/>
    <property type="match status" value="9"/>
</dbReference>
<proteinExistence type="evidence at transcript level"/>
<accession>Q0WP85</accession>
<evidence type="ECO:0000255" key="1"/>
<evidence type="ECO:0000305" key="2"/>
<protein>
    <recommendedName>
        <fullName>Pentatricopeptide repeat-containing protein At2g13420, mitochondrial</fullName>
    </recommendedName>
</protein>
<feature type="transit peptide" description="Mitochondrion" evidence="1">
    <location>
        <begin position="1"/>
        <end position="19"/>
    </location>
</feature>
<feature type="chain" id="PRO_0000356010" description="Pentatricopeptide repeat-containing protein At2g13420, mitochondrial">
    <location>
        <begin position="20"/>
        <end position="509"/>
    </location>
</feature>
<feature type="repeat" description="PPR 1">
    <location>
        <begin position="172"/>
        <end position="202"/>
    </location>
</feature>
<feature type="repeat" description="PPR 2">
    <location>
        <begin position="206"/>
        <end position="240"/>
    </location>
</feature>
<feature type="repeat" description="PPR 3">
    <location>
        <begin position="241"/>
        <end position="285"/>
    </location>
</feature>
<feature type="repeat" description="PPR 4">
    <location>
        <begin position="286"/>
        <end position="320"/>
    </location>
</feature>
<feature type="repeat" description="PPR 5">
    <location>
        <begin position="321"/>
        <end position="355"/>
    </location>
</feature>
<feature type="repeat" description="PPR 6">
    <location>
        <begin position="356"/>
        <end position="390"/>
    </location>
</feature>
<feature type="repeat" description="PPR 7">
    <location>
        <begin position="391"/>
        <end position="425"/>
    </location>
</feature>
<feature type="repeat" description="PPR 8">
    <location>
        <begin position="426"/>
        <end position="460"/>
    </location>
</feature>
<gene>
    <name type="ordered locus">At2g13420</name>
    <name type="ORF">T26C18.1</name>
</gene>
<name>PP150_ARATH</name>